<accession>Q5R7U1</accession>
<organism>
    <name type="scientific">Pongo abelii</name>
    <name type="common">Sumatran orangutan</name>
    <name type="synonym">Pongo pygmaeus abelii</name>
    <dbReference type="NCBI Taxonomy" id="9601"/>
    <lineage>
        <taxon>Eukaryota</taxon>
        <taxon>Metazoa</taxon>
        <taxon>Chordata</taxon>
        <taxon>Craniata</taxon>
        <taxon>Vertebrata</taxon>
        <taxon>Euteleostomi</taxon>
        <taxon>Mammalia</taxon>
        <taxon>Eutheria</taxon>
        <taxon>Euarchontoglires</taxon>
        <taxon>Primates</taxon>
        <taxon>Haplorrhini</taxon>
        <taxon>Catarrhini</taxon>
        <taxon>Hominidae</taxon>
        <taxon>Pongo</taxon>
    </lineage>
</organism>
<gene>
    <name type="primary">MAPK6</name>
</gene>
<proteinExistence type="evidence at transcript level"/>
<dbReference type="EC" id="2.7.11.24"/>
<dbReference type="EMBL" id="CR860018">
    <property type="protein sequence ID" value="CAH92169.1"/>
    <property type="molecule type" value="mRNA"/>
</dbReference>
<dbReference type="RefSeq" id="NP_001126270.1">
    <property type="nucleotide sequence ID" value="NM_001132798.1"/>
</dbReference>
<dbReference type="RefSeq" id="XP_009248112.2">
    <property type="nucleotide sequence ID" value="XM_009249837.4"/>
</dbReference>
<dbReference type="RefSeq" id="XP_024087937.1">
    <property type="nucleotide sequence ID" value="XM_024232169.3"/>
</dbReference>
<dbReference type="RefSeq" id="XP_024087938.1">
    <property type="nucleotide sequence ID" value="XM_024232170.3"/>
</dbReference>
<dbReference type="RefSeq" id="XP_054387091.1">
    <property type="nucleotide sequence ID" value="XM_054531116.2"/>
</dbReference>
<dbReference type="RefSeq" id="XP_063572098.1">
    <property type="nucleotide sequence ID" value="XM_063716028.1"/>
</dbReference>
<dbReference type="SMR" id="Q5R7U1"/>
<dbReference type="FunCoup" id="Q5R7U1">
    <property type="interactions" value="4216"/>
</dbReference>
<dbReference type="STRING" id="9601.ENSPPYP00000007346"/>
<dbReference type="Ensembl" id="ENSPPYT00000007648.3">
    <property type="protein sequence ID" value="ENSPPYP00000007346.3"/>
    <property type="gene ID" value="ENSPPYG00000006482.3"/>
</dbReference>
<dbReference type="GeneID" id="100173242"/>
<dbReference type="KEGG" id="pon:100173242"/>
<dbReference type="CTD" id="5597"/>
<dbReference type="eggNOG" id="KOG0660">
    <property type="taxonomic scope" value="Eukaryota"/>
</dbReference>
<dbReference type="GeneTree" id="ENSGT00940000154351"/>
<dbReference type="InParanoid" id="Q5R7U1"/>
<dbReference type="OMA" id="EADWQLH"/>
<dbReference type="OrthoDB" id="8806754at2759"/>
<dbReference type="Proteomes" id="UP000001595">
    <property type="component" value="Chromosome 15"/>
</dbReference>
<dbReference type="GO" id="GO:0005737">
    <property type="term" value="C:cytoplasm"/>
    <property type="evidence" value="ECO:0000250"/>
    <property type="project" value="UniProtKB"/>
</dbReference>
<dbReference type="GO" id="GO:0005829">
    <property type="term" value="C:cytosol"/>
    <property type="evidence" value="ECO:0007669"/>
    <property type="project" value="Ensembl"/>
</dbReference>
<dbReference type="GO" id="GO:0005634">
    <property type="term" value="C:nucleus"/>
    <property type="evidence" value="ECO:0000250"/>
    <property type="project" value="UniProtKB"/>
</dbReference>
<dbReference type="GO" id="GO:0032991">
    <property type="term" value="C:protein-containing complex"/>
    <property type="evidence" value="ECO:0007669"/>
    <property type="project" value="Ensembl"/>
</dbReference>
<dbReference type="GO" id="GO:0032156">
    <property type="term" value="C:septin cytoskeleton"/>
    <property type="evidence" value="ECO:0007669"/>
    <property type="project" value="Ensembl"/>
</dbReference>
<dbReference type="GO" id="GO:0005524">
    <property type="term" value="F:ATP binding"/>
    <property type="evidence" value="ECO:0007669"/>
    <property type="project" value="UniProtKB-KW"/>
</dbReference>
<dbReference type="GO" id="GO:0004707">
    <property type="term" value="F:MAP kinase activity"/>
    <property type="evidence" value="ECO:0000250"/>
    <property type="project" value="UniProtKB"/>
</dbReference>
<dbReference type="GO" id="GO:0046982">
    <property type="term" value="F:protein heterodimerization activity"/>
    <property type="evidence" value="ECO:0007669"/>
    <property type="project" value="Ensembl"/>
</dbReference>
<dbReference type="GO" id="GO:0019901">
    <property type="term" value="F:protein kinase binding"/>
    <property type="evidence" value="ECO:0007669"/>
    <property type="project" value="Ensembl"/>
</dbReference>
<dbReference type="GO" id="GO:0106310">
    <property type="term" value="F:protein serine kinase activity"/>
    <property type="evidence" value="ECO:0007669"/>
    <property type="project" value="RHEA"/>
</dbReference>
<dbReference type="GO" id="GO:0060999">
    <property type="term" value="P:positive regulation of dendritic spine development"/>
    <property type="evidence" value="ECO:0007669"/>
    <property type="project" value="Ensembl"/>
</dbReference>
<dbReference type="GO" id="GO:0006468">
    <property type="term" value="P:protein phosphorylation"/>
    <property type="evidence" value="ECO:0000250"/>
    <property type="project" value="UniProtKB"/>
</dbReference>
<dbReference type="CDD" id="cd07854">
    <property type="entry name" value="STKc_MAPK4_6"/>
    <property type="match status" value="1"/>
</dbReference>
<dbReference type="FunFam" id="3.30.200.20:FF:000223">
    <property type="entry name" value="Mitogen-activated protein kinase 6"/>
    <property type="match status" value="1"/>
</dbReference>
<dbReference type="FunFam" id="1.10.510.10:FF:000136">
    <property type="entry name" value="mitogen-activated protein kinase 6"/>
    <property type="match status" value="1"/>
</dbReference>
<dbReference type="Gene3D" id="3.30.200.20">
    <property type="entry name" value="Phosphorylase Kinase, domain 1"/>
    <property type="match status" value="1"/>
</dbReference>
<dbReference type="Gene3D" id="1.10.510.10">
    <property type="entry name" value="Transferase(Phosphotransferase) domain 1"/>
    <property type="match status" value="1"/>
</dbReference>
<dbReference type="InterPro" id="IPR011009">
    <property type="entry name" value="Kinase-like_dom_sf"/>
</dbReference>
<dbReference type="InterPro" id="IPR050117">
    <property type="entry name" value="MAP_kinase"/>
</dbReference>
<dbReference type="InterPro" id="IPR008350">
    <property type="entry name" value="MAPK_ERK3/4"/>
</dbReference>
<dbReference type="InterPro" id="IPR000719">
    <property type="entry name" value="Prot_kinase_dom"/>
</dbReference>
<dbReference type="InterPro" id="IPR017441">
    <property type="entry name" value="Protein_kinase_ATP_BS"/>
</dbReference>
<dbReference type="InterPro" id="IPR008271">
    <property type="entry name" value="Ser/Thr_kinase_AS"/>
</dbReference>
<dbReference type="PANTHER" id="PTHR24055">
    <property type="entry name" value="MITOGEN-ACTIVATED PROTEIN KINASE"/>
    <property type="match status" value="1"/>
</dbReference>
<dbReference type="Pfam" id="PF00069">
    <property type="entry name" value="Pkinase"/>
    <property type="match status" value="1"/>
</dbReference>
<dbReference type="PRINTS" id="PR01771">
    <property type="entry name" value="ERK3ERK4MAPK"/>
</dbReference>
<dbReference type="SMART" id="SM00220">
    <property type="entry name" value="S_TKc"/>
    <property type="match status" value="1"/>
</dbReference>
<dbReference type="SUPFAM" id="SSF56112">
    <property type="entry name" value="Protein kinase-like (PK-like)"/>
    <property type="match status" value="1"/>
</dbReference>
<dbReference type="PROSITE" id="PS00107">
    <property type="entry name" value="PROTEIN_KINASE_ATP"/>
    <property type="match status" value="1"/>
</dbReference>
<dbReference type="PROSITE" id="PS50011">
    <property type="entry name" value="PROTEIN_KINASE_DOM"/>
    <property type="match status" value="1"/>
</dbReference>
<dbReference type="PROSITE" id="PS00108">
    <property type="entry name" value="PROTEIN_KINASE_ST"/>
    <property type="match status" value="1"/>
</dbReference>
<reference key="1">
    <citation type="submission" date="2004-11" db="EMBL/GenBank/DDBJ databases">
        <authorList>
            <consortium name="The German cDNA consortium"/>
        </authorList>
    </citation>
    <scope>NUCLEOTIDE SEQUENCE [LARGE SCALE MRNA]</scope>
    <source>
        <tissue>Brain cortex</tissue>
    </source>
</reference>
<comment type="function">
    <text evidence="1">Atypical MAPK protein. Phosphorylates microtubule-associated protein 2 (MAP2) and MAPKAPK5. The precise role of the complex formed with MAPKAPK5 is still unclear, but the complex follows a complex set of phosphorylation events: upon interaction with atypical MAPKAPK5, ERK3/MAPK6 is phosphorylated at Ser-189 and then mediates phosphorylation and activation of MAPKAPK5, which in turn phosphorylates ERK3/MAPK6. May promote entry in the cell cycle (By similarity).</text>
</comment>
<comment type="catalytic activity">
    <reaction>
        <text>L-seryl-[protein] + ATP = O-phospho-L-seryl-[protein] + ADP + H(+)</text>
        <dbReference type="Rhea" id="RHEA:17989"/>
        <dbReference type="Rhea" id="RHEA-COMP:9863"/>
        <dbReference type="Rhea" id="RHEA-COMP:11604"/>
        <dbReference type="ChEBI" id="CHEBI:15378"/>
        <dbReference type="ChEBI" id="CHEBI:29999"/>
        <dbReference type="ChEBI" id="CHEBI:30616"/>
        <dbReference type="ChEBI" id="CHEBI:83421"/>
        <dbReference type="ChEBI" id="CHEBI:456216"/>
        <dbReference type="EC" id="2.7.11.24"/>
    </reaction>
</comment>
<comment type="catalytic activity">
    <reaction>
        <text>L-threonyl-[protein] + ATP = O-phospho-L-threonyl-[protein] + ADP + H(+)</text>
        <dbReference type="Rhea" id="RHEA:46608"/>
        <dbReference type="Rhea" id="RHEA-COMP:11060"/>
        <dbReference type="Rhea" id="RHEA-COMP:11605"/>
        <dbReference type="ChEBI" id="CHEBI:15378"/>
        <dbReference type="ChEBI" id="CHEBI:30013"/>
        <dbReference type="ChEBI" id="CHEBI:30616"/>
        <dbReference type="ChEBI" id="CHEBI:61977"/>
        <dbReference type="ChEBI" id="CHEBI:456216"/>
        <dbReference type="EC" id="2.7.11.24"/>
    </reaction>
</comment>
<comment type="cofactor">
    <cofactor evidence="1">
        <name>Mg(2+)</name>
        <dbReference type="ChEBI" id="CHEBI:18420"/>
    </cofactor>
</comment>
<comment type="activity regulation">
    <text evidence="1">Activated by phosphorylation at Ser-189.</text>
</comment>
<comment type="subunit">
    <text evidence="1">Heterodimer with ERK4/MAPK4. Interacts with (via FRIEDE motif) MAPKAPK5 (By similarity). Interacts with UBE3A; this interaction may be indirect and mediated by HERC2, possibly via HERC2 interaction with NEURL4 (By similarity).</text>
</comment>
<comment type="subcellular location">
    <subcellularLocation>
        <location evidence="1">Cytoplasm</location>
    </subcellularLocation>
    <subcellularLocation>
        <location evidence="1">Nucleus</location>
    </subcellularLocation>
    <text evidence="1">Translocates to the cytoplasm following interaction with MAPKAPK5.</text>
</comment>
<comment type="domain">
    <text evidence="1">In contrast to classical MAPKs, the TXY motif within the activation loop is replaced by the SEG motif, whose phosphorylation activates the MAP kinases.</text>
</comment>
<comment type="PTM">
    <text evidence="1">Phosphorylated at Ser-189 by PAK1, PAK2 and PAK3 resulting in catalytic activation. Phosphorylated by MAPKAPK5 at other sites (By similarity).</text>
</comment>
<comment type="PTM">
    <text evidence="1">Ubiquitination at Met-1 leads to degradation by the proteasome pathway.</text>
</comment>
<comment type="similarity">
    <text evidence="6">Belongs to the protein kinase superfamily. CMGC Ser/Thr protein kinase family. MAP kinase subfamily.</text>
</comment>
<protein>
    <recommendedName>
        <fullName>Mitogen-activated protein kinase 6</fullName>
        <shortName>MAP kinase 6</shortName>
        <shortName>MAPK 6</shortName>
        <ecNumber>2.7.11.24</ecNumber>
    </recommendedName>
</protein>
<sequence>MAEKFESLMNIHGFDLGSRYMDLKPLGCGGNGLVFSAVDNDCDKRVAIKKIVLTDPQSVKHALREIKIIRRLDHDNIVKVFEILGPSGSQLTDDVGSLTELNSVYIVQEYMETDLANVLEQGPLLEEHARLFMYQLLRGLKYIHSANVLHRDLKPANLFINTEDLVLKIGDFGLARIMDPHYSHKGHLSEGLVTKWYRSPRLLLSPNNYTKAIDMWAAGCIFAEMLTGKTLFAGAHELEQMQLILESIPVVHEEDRQELLSVIPVYIRNDMTEPHKPLTQLLPGISREALDFLEQILTFSPMDRLTAEEALSHPYMSIYSFPMDEPISSHPFHIEDEVDDILLMDETHSHIYNWERYHDCQFSEHDWPVHNNFDIDEVQLDPRALSDVTDEEEVQVDPRKYLDGDREKYLEDPAFDTNYSTEPCWQYSDHHENKYCDLECGHTCNYKTRSSSYLDNLVWRESEVNHYYEPKLIIDLSNWKEQSKEKSDKKGKSKCERNGLVKAQIALEEASQQLAGKEREKNQGFDFDSFIAGTIQLSSQHEPTDVVDKLNDLNSSVSQLELKSLISKSVSQEKQEKGMANLAQLEALYQSSWDSQFVNGGEDCFFINQFCEVRKDEQVEKENTYTSYLDKFFSRKEDTEMLETEPVEDGKLGERGHEEGFLNNSGEFLFNKQLESIGIPQFHSPVGSPLKSIQATLTPSAMKSSPQIPHQTYSSILKHLN</sequence>
<name>MK06_PONAB</name>
<keyword id="KW-0067">ATP-binding</keyword>
<keyword id="KW-0131">Cell cycle</keyword>
<keyword id="KW-0963">Cytoplasm</keyword>
<keyword id="KW-0418">Kinase</keyword>
<keyword id="KW-0547">Nucleotide-binding</keyword>
<keyword id="KW-0539">Nucleus</keyword>
<keyword id="KW-0597">Phosphoprotein</keyword>
<keyword id="KW-1185">Reference proteome</keyword>
<keyword id="KW-0723">Serine/threonine-protein kinase</keyword>
<keyword id="KW-0808">Transferase</keyword>
<keyword id="KW-0832">Ubl conjugation</keyword>
<feature type="chain" id="PRO_0000249009" description="Mitogen-activated protein kinase 6">
    <location>
        <begin position="1"/>
        <end position="721"/>
    </location>
</feature>
<feature type="domain" description="Protein kinase" evidence="3">
    <location>
        <begin position="20"/>
        <end position="316"/>
    </location>
</feature>
<feature type="region of interest" description="Disordered" evidence="5">
    <location>
        <begin position="701"/>
        <end position="721"/>
    </location>
</feature>
<feature type="short sequence motif" description="SEG motif">
    <location>
        <begin position="189"/>
        <end position="191"/>
    </location>
</feature>
<feature type="short sequence motif" description="FRIEDE motif">
    <location>
        <begin position="332"/>
        <end position="337"/>
    </location>
</feature>
<feature type="compositionally biased region" description="Polar residues" evidence="5">
    <location>
        <begin position="701"/>
        <end position="715"/>
    </location>
</feature>
<feature type="active site" description="Proton acceptor" evidence="3 4">
    <location>
        <position position="152"/>
    </location>
</feature>
<feature type="binding site" evidence="3">
    <location>
        <begin position="26"/>
        <end position="34"/>
    </location>
    <ligand>
        <name>ATP</name>
        <dbReference type="ChEBI" id="CHEBI:30616"/>
    </ligand>
</feature>
<feature type="binding site" evidence="3">
    <location>
        <position position="49"/>
    </location>
    <ligand>
        <name>ATP</name>
        <dbReference type="ChEBI" id="CHEBI:30616"/>
    </ligand>
</feature>
<feature type="modified residue" description="Phosphoserine; by PAK1, PAK2 and PAK3" evidence="2">
    <location>
        <position position="189"/>
    </location>
</feature>
<feature type="modified residue" description="Phosphoserine" evidence="2">
    <location>
        <position position="386"/>
    </location>
</feature>
<feature type="modified residue" description="Phosphoserine" evidence="2">
    <location>
        <position position="452"/>
    </location>
</feature>
<feature type="modified residue" description="Phosphoserine" evidence="2">
    <location>
        <position position="556"/>
    </location>
</feature>
<feature type="modified residue" description="Phosphoserine" evidence="2">
    <location>
        <position position="558"/>
    </location>
</feature>
<feature type="modified residue" description="Phosphoserine" evidence="2">
    <location>
        <position position="665"/>
    </location>
</feature>
<feature type="modified residue" description="Phosphoserine" evidence="2">
    <location>
        <position position="684"/>
    </location>
</feature>
<feature type="cross-link" description="Peptide (Met-Gly) (interchain with G-Cter in ubiquitin)" evidence="1">
    <location>
        <position position="1"/>
    </location>
</feature>
<evidence type="ECO:0000250" key="1"/>
<evidence type="ECO:0000250" key="2">
    <source>
        <dbReference type="UniProtKB" id="Q16659"/>
    </source>
</evidence>
<evidence type="ECO:0000255" key="3">
    <source>
        <dbReference type="PROSITE-ProRule" id="PRU00159"/>
    </source>
</evidence>
<evidence type="ECO:0000255" key="4">
    <source>
        <dbReference type="PROSITE-ProRule" id="PRU10027"/>
    </source>
</evidence>
<evidence type="ECO:0000256" key="5">
    <source>
        <dbReference type="SAM" id="MobiDB-lite"/>
    </source>
</evidence>
<evidence type="ECO:0000305" key="6"/>